<accession>P52407</accession>
<reference key="1">
    <citation type="journal article" date="1995" name="Plant Mol. Biol.">
        <title>Beta-1,3-glucanase is highly-expressed in laticifers of Hevea brasiliensis.</title>
        <authorList>
            <person name="Chye M.-L."/>
            <person name="Cheung K.-Y."/>
        </authorList>
    </citation>
    <scope>NUCLEOTIDE SEQUENCE [MRNA]</scope>
    <scope>TISSUE SPECIFICITY</scope>
    <source>
        <strain>cv. RRIM 600</strain>
        <tissue>Latex</tissue>
    </source>
</reference>
<reference key="2">
    <citation type="journal article" date="1996" name="Phytochemistry">
        <title>Chitinase and beta-1,3-glucanase in the lutoid-body fraction of Hevea latex.</title>
        <authorList>
            <person name="Subroto T."/>
            <person name="van Koningsveld G.A."/>
            <person name="Schreuder H.A."/>
            <person name="Soedjanaatmadja U.M.S."/>
            <person name="Beintema J.J."/>
        </authorList>
    </citation>
    <scope>PROTEIN SEQUENCE OF 45-64 AND 323-352</scope>
    <source>
        <strain>cv. RRIM 600</strain>
        <tissue>Latex</tissue>
    </source>
</reference>
<reference key="3">
    <citation type="journal article" date="2001" name="Plant Physiol. Biochem.">
        <title>Enzymic and structural studies on processed proteins from the vacuolar (lutoid-body) fraction of latex of Hevea brasiliensis.</title>
        <authorList>
            <person name="Subroto T."/>
            <person name="de Vries H."/>
            <person name="Schuringa J.J."/>
            <person name="Soedjanaatmadja U.M.S."/>
            <person name="Hofsteenge J."/>
            <person name="Jekel P.A."/>
            <person name="Beintema J.J."/>
        </authorList>
    </citation>
    <scope>PROTEIN SEQUENCE OF 323-356</scope>
    <scope>FUNCTION</scope>
    <scope>CATALYTIC ACTIVITY</scope>
    <scope>BIOPHYSICOCHEMICAL PROPERTIES</scope>
    <scope>GLYCOSYLATION AT ASN-63 AND ASN-350</scope>
    <scope>PROTEOLYTIC PROCESSING OF C-TERMINUS</scope>
    <scope>VARIANTS ASP-342 AND GLY-352</scope>
    <source>
        <strain>cv. GT.1</strain>
        <strain>cv. PR 261</strain>
        <strain>cv. RRIM 600</strain>
    </source>
</reference>
<reference key="4">
    <citation type="journal article" date="1995" name="Phytochemistry">
        <title>Beta-1,3-glucanase isozymes from the latex of Hevea brasiliensis.</title>
        <authorList>
            <person name="Churngchow N."/>
            <person name="Suntaro A."/>
            <person name="Wititsuwannnakul R."/>
        </authorList>
    </citation>
    <scope>SUBUNIT</scope>
    <source>
        <strain>cv. RRIM 600</strain>
    </source>
</reference>
<reference key="5">
    <citation type="journal article" date="2015" name="Mol. Immunol.">
        <title>Impact of the vulcanization process on the structural characteristics and IgE recognition of two allergens, Hev b 2 and Hev b 6.02, extracted from latex surgical gloves.</title>
        <authorList>
            <person name="Galicia C."/>
            <person name="Mendoza-Hernandez G."/>
            <person name="Rodriguez-Romero A."/>
        </authorList>
    </citation>
    <scope>IDENTIFICATION BY MASS SPECTROMETRY</scope>
    <scope>FUNCTION</scope>
    <scope>ALLERGEN</scope>
</reference>
<name>E13B_HEVBR</name>
<protein>
    <recommendedName>
        <fullName evidence="10">Glucan endo-1,3-beta-glucosidase, basic vacuolar isoform</fullName>
        <ecNumber evidence="6">3.2.1.39</ecNumber>
    </recommendedName>
    <alternativeName>
        <fullName evidence="10">(1-&gt;3)-beta-glucan endohydrolase</fullName>
        <shortName evidence="10">(1-&gt;3)-beta-glucanase</shortName>
    </alternativeName>
    <alternativeName>
        <fullName evidence="10">Beta-1,3-endoglucanase</fullName>
    </alternativeName>
    <allergenName evidence="8">Hev b 2</allergenName>
    <component>
        <recommendedName>
            <fullName evidence="12">Glucan endo-1,3-beta-glucosidase minor form 3</fullName>
        </recommendedName>
    </component>
    <component>
        <recommendedName>
            <fullName evidence="12">Glucan endo-1,3-beta-glucosidase minor form 2</fullName>
        </recommendedName>
    </component>
    <component>
        <recommendedName>
            <fullName evidence="12">Glucan endo-1,3-beta-glucosidase minor form 1</fullName>
        </recommendedName>
    </component>
    <component>
        <recommendedName>
            <fullName evidence="12">Glucan endo-1,3-beta-glucosidase major form</fullName>
        </recommendedName>
    </component>
</protein>
<proteinExistence type="evidence at protein level"/>
<organism>
    <name type="scientific">Hevea brasiliensis</name>
    <name type="common">Para rubber tree</name>
    <name type="synonym">Siphonia brasiliensis</name>
    <dbReference type="NCBI Taxonomy" id="3981"/>
    <lineage>
        <taxon>Eukaryota</taxon>
        <taxon>Viridiplantae</taxon>
        <taxon>Streptophyta</taxon>
        <taxon>Embryophyta</taxon>
        <taxon>Tracheophyta</taxon>
        <taxon>Spermatophyta</taxon>
        <taxon>Magnoliopsida</taxon>
        <taxon>eudicotyledons</taxon>
        <taxon>Gunneridae</taxon>
        <taxon>Pentapetalae</taxon>
        <taxon>rosids</taxon>
        <taxon>fabids</taxon>
        <taxon>Malpighiales</taxon>
        <taxon>Euphorbiaceae</taxon>
        <taxon>Crotonoideae</taxon>
        <taxon>Micrandreae</taxon>
        <taxon>Hevea</taxon>
    </lineage>
</organism>
<gene>
    <name evidence="9" type="primary">HGN1</name>
</gene>
<feature type="signal peptide" evidence="3">
    <location>
        <begin position="1"/>
        <end position="36"/>
    </location>
</feature>
<feature type="chain" id="PRO_0000011843" description="Glucan endo-1,3-beta-glucosidase minor form 3">
    <location>
        <begin position="37"/>
        <end position="356"/>
    </location>
</feature>
<feature type="chain" id="PRO_0000011844" description="Glucan endo-1,3-beta-glucosidase minor form 2">
    <location>
        <begin position="37"/>
        <end position="355"/>
    </location>
</feature>
<feature type="chain" id="PRO_0000011845" description="Glucan endo-1,3-beta-glucosidase minor form 1">
    <location>
        <begin position="37"/>
        <end position="354"/>
    </location>
</feature>
<feature type="chain" id="PRO_0000011846" description="Glucan endo-1,3-beta-glucosidase major form">
    <location>
        <begin position="37"/>
        <end position="352"/>
    </location>
</feature>
<feature type="propeptide" id="PRO_0000011847" description="Removed in mature form" evidence="3">
    <location>
        <begin position="357"/>
        <end position="374"/>
    </location>
</feature>
<feature type="active site" description="Proton donor" evidence="1">
    <location>
        <position position="130"/>
    </location>
</feature>
<feature type="active site" description="Nucleophile" evidence="1">
    <location>
        <position position="276"/>
    </location>
</feature>
<feature type="modified residue" description="Pyrrolidone carboxylic acid" evidence="2">
    <location>
        <position position="37"/>
    </location>
</feature>
<feature type="glycosylation site" description="N-linked (GlcNAc...) asparagine" evidence="6">
    <location>
        <position position="63"/>
    </location>
</feature>
<feature type="glycosylation site" description="N-linked (GlcNAc...) asparagine" evidence="6">
    <location>
        <position position="350"/>
    </location>
</feature>
<feature type="glycosylation site" description="N-linked (GlcNAc...) asparagine" evidence="3">
    <location>
        <position position="364"/>
    </location>
</feature>
<feature type="sequence variant" description="In strain: cv. PR 261 and cv. RRIM 600." evidence="6">
    <original>N</original>
    <variation>D</variation>
    <location>
        <position position="342"/>
    </location>
</feature>
<feature type="sequence variant" description="In strain: cv. PR 261 and cv. RRIM 600." evidence="6">
    <original>S</original>
    <variation>G</variation>
    <location>
        <position position="352"/>
    </location>
</feature>
<feature type="sequence conflict" description="In Ref. 1; AAA87456." evidence="10" ref="1">
    <original>WQ</original>
    <variation>RP</variation>
    <location>
        <begin position="344"/>
        <end position="345"/>
    </location>
</feature>
<keyword id="KW-0020">Allergen</keyword>
<keyword id="KW-0903">Direct protein sequencing</keyword>
<keyword id="KW-0325">Glycoprotein</keyword>
<keyword id="KW-0326">Glycosidase</keyword>
<keyword id="KW-0378">Hydrolase</keyword>
<keyword id="KW-0611">Plant defense</keyword>
<keyword id="KW-0873">Pyrrolidone carboxylic acid</keyword>
<keyword id="KW-0732">Signal</keyword>
<keyword id="KW-0926">Vacuole</keyword>
<sequence>MAISSSTSGTSSSFPSRTTVMLLLFFFAASVGITDAQVGVCYGMQGNNLPPVSEVIALYKKSNITRMRIYDPNRAVLEALRGSNIELILGVPNSDLQSLTNPSNAKSWVQKNVRGFWSSVLFRYIAVGNEISPVNRGTAWLAQFVLPAMRNIHDAIRSAGLQDQIKVSTAIDLTLVGNSYPPSAGAFRDDVRSYLDPIIGFLSSIRSPLLANIYPYFTYAYNPRDISLPYALFTSPSVVVWDGQRGYKNLFDATLDALYSALERASGGSLEVVVSESGWPSAGAFAATFDNGRTYLSNLIQHVKGGTPKRPNRAIETYLFAMFDENKKQPEVEKHFGLFFPNKWQKYNLNFSAEKNWDISTEHNATILFLKSDM</sequence>
<evidence type="ECO:0000250" key="1">
    <source>
        <dbReference type="UniProtKB" id="O22317"/>
    </source>
</evidence>
<evidence type="ECO:0000250" key="2">
    <source>
        <dbReference type="UniProtKB" id="P15797"/>
    </source>
</evidence>
<evidence type="ECO:0000255" key="3"/>
<evidence type="ECO:0000269" key="4">
    <source>
    </source>
</evidence>
<evidence type="ECO:0000269" key="5">
    <source>
    </source>
</evidence>
<evidence type="ECO:0000269" key="6">
    <source ref="3"/>
</evidence>
<evidence type="ECO:0000269" key="7">
    <source ref="4"/>
</evidence>
<evidence type="ECO:0000303" key="8">
    <source>
    </source>
</evidence>
<evidence type="ECO:0000303" key="9">
    <source>
    </source>
</evidence>
<evidence type="ECO:0000305" key="10"/>
<evidence type="ECO:0000305" key="11">
    <source>
    </source>
</evidence>
<evidence type="ECO:0000305" key="12">
    <source ref="3"/>
</evidence>
<dbReference type="EC" id="3.2.1.39" evidence="6"/>
<dbReference type="EMBL" id="U22147">
    <property type="protein sequence ID" value="AAA87456.1"/>
    <property type="molecule type" value="mRNA"/>
</dbReference>
<dbReference type="PIR" id="S65077">
    <property type="entry name" value="S65077"/>
</dbReference>
<dbReference type="SMR" id="P52407"/>
<dbReference type="Allergome" id="3313">
    <property type="allergen name" value="Hev b 2.0101"/>
</dbReference>
<dbReference type="Allergome" id="386">
    <property type="allergen name" value="Hev b 2"/>
</dbReference>
<dbReference type="CAZy" id="GH17">
    <property type="family name" value="Glycoside Hydrolase Family 17"/>
</dbReference>
<dbReference type="GlyCosmos" id="P52407">
    <property type="glycosylation" value="3 sites, No reported glycans"/>
</dbReference>
<dbReference type="GO" id="GO:0005773">
    <property type="term" value="C:vacuole"/>
    <property type="evidence" value="ECO:0007669"/>
    <property type="project" value="UniProtKB-SubCell"/>
</dbReference>
<dbReference type="GO" id="GO:0042973">
    <property type="term" value="F:glucan endo-1,3-beta-D-glucosidase activity"/>
    <property type="evidence" value="ECO:0000314"/>
    <property type="project" value="UniProtKB"/>
</dbReference>
<dbReference type="GO" id="GO:0005975">
    <property type="term" value="P:carbohydrate metabolic process"/>
    <property type="evidence" value="ECO:0007669"/>
    <property type="project" value="InterPro"/>
</dbReference>
<dbReference type="GO" id="GO:0006952">
    <property type="term" value="P:defense response"/>
    <property type="evidence" value="ECO:0007669"/>
    <property type="project" value="UniProtKB-KW"/>
</dbReference>
<dbReference type="FunFam" id="3.20.20.80:FF:000010">
    <property type="entry name" value="glucan endo-1,3-beta-glucosidase, basic"/>
    <property type="match status" value="1"/>
</dbReference>
<dbReference type="Gene3D" id="3.20.20.80">
    <property type="entry name" value="Glycosidases"/>
    <property type="match status" value="1"/>
</dbReference>
<dbReference type="InterPro" id="IPR000490">
    <property type="entry name" value="Glyco_hydro_17"/>
</dbReference>
<dbReference type="InterPro" id="IPR044965">
    <property type="entry name" value="Glyco_hydro_17_plant"/>
</dbReference>
<dbReference type="InterPro" id="IPR017853">
    <property type="entry name" value="Glycoside_hydrolase_SF"/>
</dbReference>
<dbReference type="PANTHER" id="PTHR32227">
    <property type="entry name" value="GLUCAN ENDO-1,3-BETA-GLUCOSIDASE BG1-RELATED-RELATED"/>
    <property type="match status" value="1"/>
</dbReference>
<dbReference type="Pfam" id="PF00332">
    <property type="entry name" value="Glyco_hydro_17"/>
    <property type="match status" value="1"/>
</dbReference>
<dbReference type="SUPFAM" id="SSF51445">
    <property type="entry name" value="(Trans)glycosidases"/>
    <property type="match status" value="1"/>
</dbReference>
<dbReference type="PROSITE" id="PS00587">
    <property type="entry name" value="GLYCOSYL_HYDROL_F17"/>
    <property type="match status" value="1"/>
</dbReference>
<comment type="function">
    <text evidence="4 10">Possesses beta-1,3-endoglucanase activity in vitro (PubMed:25700348). Is thought to be an important plant defense-related product against fungal pathogens (Probable).</text>
</comment>
<comment type="catalytic activity">
    <reaction evidence="6">
        <text>Hydrolysis of (1-&gt;3)-beta-D-glucosidic linkages in (1-&gt;3)-beta-D-glucans.</text>
        <dbReference type="EC" id="3.2.1.39"/>
    </reaction>
</comment>
<comment type="biophysicochemical properties">
    <phDependence>
        <text evidence="6">Optimum pH is 4.5-5.0. The enzyme from cv. GT.1 displays a second optimum pH at 6.7.</text>
    </phDependence>
</comment>
<comment type="subunit">
    <text evidence="7">Monomer.</text>
</comment>
<comment type="subcellular location">
    <subcellularLocation>
        <location evidence="10">Vacuole</location>
    </subcellularLocation>
</comment>
<comment type="tissue specificity">
    <text evidence="5">Expressed at highest levels in laticifer cells of the petiole.</text>
</comment>
<comment type="PTM">
    <text evidence="6">Glycosylated in cv. GT.1 and cv. RRIM 600 but not in cv. PR 261. Asn-350 is glycosylated only in cv. GT.1 due to the presence of Ser-352. In cv. PR 261 and cv. RRIM 600, Ser-352 is replaced by Gly so Asn-350 is not glycosylated.</text>
</comment>
<comment type="PTM">
    <text evidence="6">In cv. GT.1, four different forms of the enzyme have been detected with differently processed C-termini. In cv. PR 261 and cv. RRIM 600, only 2 forms are detected, a major form which is processed at residue 352 and a minor form which is processed at residue 354.</text>
</comment>
<comment type="polymorphism">
    <text evidence="6">The enzyme from cv. GT.1 displays a 3-5 fold lower specific activity than the enzyme from cv. PR 261.</text>
</comment>
<comment type="allergen">
    <text evidence="4 11">Causes an allergic reaction in human (PubMed:25700348). Binds to IgE of patients allergic to rubber latex (PubMed:25700348). Binds to IgE of patients allergic to fruits (PubMed:25700348). Associated to the latex-fruit syndrome, a hypersensitivity to latex developed by individuals who are allergic to consumed fruits (Probable).</text>
</comment>
<comment type="similarity">
    <text evidence="10">Belongs to the glycosyl hydrolase 17 family.</text>
</comment>